<accession>P12136</accession>
<protein>
    <recommendedName>
        <fullName>Putative translation initiation factor IF-1, chloroplastic</fullName>
    </recommendedName>
</protein>
<feature type="chain" id="PRO_0000095954" description="Putative translation initiation factor IF-1, chloroplastic">
    <location>
        <begin position="1"/>
        <end position="96"/>
    </location>
</feature>
<feature type="domain" description="S1-like" evidence="1">
    <location>
        <begin position="18"/>
        <end position="57"/>
    </location>
</feature>
<geneLocation type="chloroplast"/>
<gene>
    <name type="primary">infA</name>
</gene>
<reference key="1">
    <citation type="journal article" date="1986" name="EMBO J.">
        <title>The complete nucleotide sequence of the tobacco chloroplast genome: its gene organization and expression.</title>
        <authorList>
            <person name="Shinozaki K."/>
            <person name="Ohme M."/>
            <person name="Tanaka M."/>
            <person name="Wakasugi T."/>
            <person name="Hayashida N."/>
            <person name="Matsubayashi T."/>
            <person name="Zaita N."/>
            <person name="Chunwongse J."/>
            <person name="Obokata J."/>
            <person name="Yamaguchi-Shinozaki K."/>
            <person name="Ohto C."/>
            <person name="Torazawa K."/>
            <person name="Meng B.-Y."/>
            <person name="Sugita M."/>
            <person name="Deno H."/>
            <person name="Kamogashira T."/>
            <person name="Yamada K."/>
            <person name="Kusuda J."/>
            <person name="Takaiwa F."/>
            <person name="Kato A."/>
            <person name="Tohdoh N."/>
            <person name="Shimada H."/>
            <person name="Sugiura M."/>
        </authorList>
    </citation>
    <scope>NUCLEOTIDE SEQUENCE [LARGE SCALE GENOMIC DNA]</scope>
    <source>
        <strain>cv. Bright Yellow 4</strain>
    </source>
</reference>
<sequence>LLNRLPNGLFRVCLDLIINYVSGKIRHSFIRILPGDRVKIEVSPYDSTKGRIIYRLHNKDLKDSFFNFTIPFVGIQFEMKNFKKLIFFQEIDSELR</sequence>
<comment type="function">
    <text evidence="2">One of the essential components for the initiation of protein synthesis. Stabilizes the binding of IF-2 and IF-3 on the 30S subunit to which N-formylmethionyl-tRNA(fMet) subsequently binds. Helps modulate mRNA selection, yielding the 30S pre-initiation complex (PIC). Upon addition of the 50S ribosomal subunit IF-1, IF-2 and IF-3 are released leaving the mature 70S translation initiation complex.</text>
</comment>
<comment type="subunit">
    <text evidence="2">Component of the 30S ribosomal translation pre-initiation complex which assembles on the 30S ribosome in the order IF-2 and IF-3, IF-1 and N-formylmethionyl-tRNA(fMet); mRNA recruitment can occur at any time during PIC assembly.</text>
</comment>
<comment type="subcellular location">
    <subcellularLocation>
        <location evidence="2">Plastid</location>
        <location evidence="2">Chloroplast</location>
    </subcellularLocation>
</comment>
<comment type="similarity">
    <text evidence="2">Belongs to the IF-1 family.</text>
</comment>
<comment type="caution">
    <text evidence="2">Could be the product of a pseudogene.</text>
</comment>
<name>IF1C_TOBAC</name>
<keyword id="KW-0150">Chloroplast</keyword>
<keyword id="KW-0396">Initiation factor</keyword>
<keyword id="KW-0934">Plastid</keyword>
<keyword id="KW-0648">Protein biosynthesis</keyword>
<keyword id="KW-1185">Reference proteome</keyword>
<keyword id="KW-0694">RNA-binding</keyword>
<keyword id="KW-0699">rRNA-binding</keyword>
<evidence type="ECO:0000255" key="1">
    <source>
        <dbReference type="PROSITE-ProRule" id="PRU00181"/>
    </source>
</evidence>
<evidence type="ECO:0000305" key="2"/>
<dbReference type="EMBL" id="Z00044">
    <property type="status" value="NOT_ANNOTATED_CDS"/>
    <property type="molecule type" value="Genomic_DNA"/>
</dbReference>
<dbReference type="PIR" id="A05035">
    <property type="entry name" value="A05035"/>
</dbReference>
<dbReference type="SMR" id="P12136"/>
<dbReference type="Proteomes" id="UP000084051">
    <property type="component" value="Unplaced"/>
</dbReference>
<dbReference type="GO" id="GO:0009507">
    <property type="term" value="C:chloroplast"/>
    <property type="evidence" value="ECO:0007669"/>
    <property type="project" value="UniProtKB-SubCell"/>
</dbReference>
<dbReference type="GO" id="GO:0019843">
    <property type="term" value="F:rRNA binding"/>
    <property type="evidence" value="ECO:0007669"/>
    <property type="project" value="UniProtKB-KW"/>
</dbReference>
<dbReference type="GO" id="GO:0003743">
    <property type="term" value="F:translation initiation factor activity"/>
    <property type="evidence" value="ECO:0007669"/>
    <property type="project" value="UniProtKB-KW"/>
</dbReference>
<dbReference type="Gene3D" id="2.40.50.140">
    <property type="entry name" value="Nucleic acid-binding proteins"/>
    <property type="match status" value="1"/>
</dbReference>
<dbReference type="InterPro" id="IPR012340">
    <property type="entry name" value="NA-bd_OB-fold"/>
</dbReference>
<dbReference type="InterPro" id="IPR006196">
    <property type="entry name" value="RNA-binding_domain_S1_IF1"/>
</dbReference>
<dbReference type="InterPro" id="IPR004368">
    <property type="entry name" value="TIF_IF1"/>
</dbReference>
<dbReference type="NCBIfam" id="TIGR00008">
    <property type="entry name" value="infA"/>
    <property type="match status" value="1"/>
</dbReference>
<dbReference type="PANTHER" id="PTHR33370">
    <property type="entry name" value="TRANSLATION INITIATION FACTOR IF-1, CHLOROPLASTIC"/>
    <property type="match status" value="1"/>
</dbReference>
<dbReference type="PANTHER" id="PTHR33370:SF1">
    <property type="entry name" value="TRANSLATION INITIATION FACTOR IF-1, CHLOROPLASTIC"/>
    <property type="match status" value="1"/>
</dbReference>
<dbReference type="Pfam" id="PF01176">
    <property type="entry name" value="eIF-1a"/>
    <property type="match status" value="1"/>
</dbReference>
<dbReference type="SUPFAM" id="SSF50249">
    <property type="entry name" value="Nucleic acid-binding proteins"/>
    <property type="match status" value="1"/>
</dbReference>
<dbReference type="PROSITE" id="PS50832">
    <property type="entry name" value="S1_IF1_TYPE"/>
    <property type="match status" value="1"/>
</dbReference>
<proteinExistence type="uncertain"/>
<organism>
    <name type="scientific">Nicotiana tabacum</name>
    <name type="common">Common tobacco</name>
    <dbReference type="NCBI Taxonomy" id="4097"/>
    <lineage>
        <taxon>Eukaryota</taxon>
        <taxon>Viridiplantae</taxon>
        <taxon>Streptophyta</taxon>
        <taxon>Embryophyta</taxon>
        <taxon>Tracheophyta</taxon>
        <taxon>Spermatophyta</taxon>
        <taxon>Magnoliopsida</taxon>
        <taxon>eudicotyledons</taxon>
        <taxon>Gunneridae</taxon>
        <taxon>Pentapetalae</taxon>
        <taxon>asterids</taxon>
        <taxon>lamiids</taxon>
        <taxon>Solanales</taxon>
        <taxon>Solanaceae</taxon>
        <taxon>Nicotianoideae</taxon>
        <taxon>Nicotianeae</taxon>
        <taxon>Nicotiana</taxon>
    </lineage>
</organism>